<reference key="1">
    <citation type="journal article" date="2010" name="Nature">
        <title>The sequence and de novo assembly of the giant panda genome.</title>
        <authorList>
            <person name="Li R."/>
            <person name="Fan W."/>
            <person name="Tian G."/>
            <person name="Zhu H."/>
            <person name="He L."/>
            <person name="Cai J."/>
            <person name="Huang Q."/>
            <person name="Cai Q."/>
            <person name="Li B."/>
            <person name="Bai Y."/>
            <person name="Zhang Z."/>
            <person name="Zhang Y."/>
            <person name="Wang W."/>
            <person name="Li J."/>
            <person name="Wei F."/>
            <person name="Li H."/>
            <person name="Jian M."/>
            <person name="Li J."/>
            <person name="Zhang Z."/>
            <person name="Nielsen R."/>
            <person name="Li D."/>
            <person name="Gu W."/>
            <person name="Yang Z."/>
            <person name="Xuan Z."/>
            <person name="Ryder O.A."/>
            <person name="Leung F.C."/>
            <person name="Zhou Y."/>
            <person name="Cao J."/>
            <person name="Sun X."/>
            <person name="Fu Y."/>
            <person name="Fang X."/>
            <person name="Guo X."/>
            <person name="Wang B."/>
            <person name="Hou R."/>
            <person name="Shen F."/>
            <person name="Mu B."/>
            <person name="Ni P."/>
            <person name="Lin R."/>
            <person name="Qian W."/>
            <person name="Wang G."/>
            <person name="Yu C."/>
            <person name="Nie W."/>
            <person name="Wang J."/>
            <person name="Wu Z."/>
            <person name="Liang H."/>
            <person name="Min J."/>
            <person name="Wu Q."/>
            <person name="Cheng S."/>
            <person name="Ruan J."/>
            <person name="Wang M."/>
            <person name="Shi Z."/>
            <person name="Wen M."/>
            <person name="Liu B."/>
            <person name="Ren X."/>
            <person name="Zheng H."/>
            <person name="Dong D."/>
            <person name="Cook K."/>
            <person name="Shan G."/>
            <person name="Zhang H."/>
            <person name="Kosiol C."/>
            <person name="Xie X."/>
            <person name="Lu Z."/>
            <person name="Zheng H."/>
            <person name="Li Y."/>
            <person name="Steiner C.C."/>
            <person name="Lam T.T."/>
            <person name="Lin S."/>
            <person name="Zhang Q."/>
            <person name="Li G."/>
            <person name="Tian J."/>
            <person name="Gong T."/>
            <person name="Liu H."/>
            <person name="Zhang D."/>
            <person name="Fang L."/>
            <person name="Ye C."/>
            <person name="Zhang J."/>
            <person name="Hu W."/>
            <person name="Xu A."/>
            <person name="Ren Y."/>
            <person name="Zhang G."/>
            <person name="Bruford M.W."/>
            <person name="Li Q."/>
            <person name="Ma L."/>
            <person name="Guo Y."/>
            <person name="An N."/>
            <person name="Hu Y."/>
            <person name="Zheng Y."/>
            <person name="Shi Y."/>
            <person name="Li Z."/>
            <person name="Liu Q."/>
            <person name="Chen Y."/>
            <person name="Zhao J."/>
            <person name="Qu N."/>
            <person name="Zhao S."/>
            <person name="Tian F."/>
            <person name="Wang X."/>
            <person name="Wang H."/>
            <person name="Xu L."/>
            <person name="Liu X."/>
            <person name="Vinar T."/>
            <person name="Wang Y."/>
            <person name="Lam T.W."/>
            <person name="Yiu S.M."/>
            <person name="Liu S."/>
            <person name="Zhang H."/>
            <person name="Li D."/>
            <person name="Huang Y."/>
            <person name="Wang X."/>
            <person name="Yang G."/>
            <person name="Jiang Z."/>
            <person name="Wang J."/>
            <person name="Qin N."/>
            <person name="Li L."/>
            <person name="Li J."/>
            <person name="Bolund L."/>
            <person name="Kristiansen K."/>
            <person name="Wong G.K."/>
            <person name="Olson M."/>
            <person name="Zhang X."/>
            <person name="Li S."/>
            <person name="Yang H."/>
            <person name="Wang J."/>
            <person name="Wang J."/>
        </authorList>
    </citation>
    <scope>NUCLEOTIDE SEQUENCE [LARGE SCALE GENOMIC DNA]</scope>
</reference>
<name>ZFY26_AILME</name>
<dbReference type="EMBL" id="GL192509">
    <property type="protein sequence ID" value="EFB24961.1"/>
    <property type="molecule type" value="Genomic_DNA"/>
</dbReference>
<dbReference type="RefSeq" id="XP_011220351.1">
    <property type="nucleotide sequence ID" value="XM_011222049.3"/>
</dbReference>
<dbReference type="RefSeq" id="XP_034498233.1">
    <property type="nucleotide sequence ID" value="XM_034642342.1"/>
</dbReference>
<dbReference type="STRING" id="9646.ENSAMEP00000015112"/>
<dbReference type="Ensembl" id="ENSAMET00000015733.2">
    <property type="protein sequence ID" value="ENSAMEP00000015112.2"/>
    <property type="gene ID" value="ENSAMEG00000014294.2"/>
</dbReference>
<dbReference type="GeneID" id="100468320"/>
<dbReference type="KEGG" id="aml:100468320"/>
<dbReference type="CTD" id="23503"/>
<dbReference type="eggNOG" id="KOG1811">
    <property type="taxonomic scope" value="Eukaryota"/>
</dbReference>
<dbReference type="HOGENOM" id="CLU_228199_0_0_1"/>
<dbReference type="InParanoid" id="D2H5P6"/>
<dbReference type="OrthoDB" id="1936617at2759"/>
<dbReference type="Proteomes" id="UP000008912">
    <property type="component" value="Unassembled WGS sequence"/>
</dbReference>
<dbReference type="GO" id="GO:0005813">
    <property type="term" value="C:centrosome"/>
    <property type="evidence" value="ECO:0000250"/>
    <property type="project" value="UniProtKB"/>
</dbReference>
<dbReference type="GO" id="GO:0005769">
    <property type="term" value="C:early endosome"/>
    <property type="evidence" value="ECO:0007669"/>
    <property type="project" value="Ensembl"/>
</dbReference>
<dbReference type="GO" id="GO:0005770">
    <property type="term" value="C:late endosome"/>
    <property type="evidence" value="ECO:0007669"/>
    <property type="project" value="Ensembl"/>
</dbReference>
<dbReference type="GO" id="GO:0005765">
    <property type="term" value="C:lysosomal membrane"/>
    <property type="evidence" value="ECO:0007669"/>
    <property type="project" value="TreeGrafter"/>
</dbReference>
<dbReference type="GO" id="GO:0030496">
    <property type="term" value="C:midbody"/>
    <property type="evidence" value="ECO:0000250"/>
    <property type="project" value="UniProtKB"/>
</dbReference>
<dbReference type="GO" id="GO:0032266">
    <property type="term" value="F:phosphatidylinositol-3-phosphate binding"/>
    <property type="evidence" value="ECO:0000250"/>
    <property type="project" value="UniProtKB"/>
</dbReference>
<dbReference type="GO" id="GO:0019901">
    <property type="term" value="F:protein kinase binding"/>
    <property type="evidence" value="ECO:0007669"/>
    <property type="project" value="Ensembl"/>
</dbReference>
<dbReference type="GO" id="GO:0008270">
    <property type="term" value="F:zinc ion binding"/>
    <property type="evidence" value="ECO:0007669"/>
    <property type="project" value="UniProtKB-KW"/>
</dbReference>
<dbReference type="GO" id="GO:1905037">
    <property type="term" value="P:autophagosome organization"/>
    <property type="evidence" value="ECO:0007669"/>
    <property type="project" value="Ensembl"/>
</dbReference>
<dbReference type="GO" id="GO:0000724">
    <property type="term" value="P:double-strand break repair via homologous recombination"/>
    <property type="evidence" value="ECO:0007669"/>
    <property type="project" value="Ensembl"/>
</dbReference>
<dbReference type="GO" id="GO:0007040">
    <property type="term" value="P:lysosome organization"/>
    <property type="evidence" value="ECO:0007669"/>
    <property type="project" value="Ensembl"/>
</dbReference>
<dbReference type="GO" id="GO:0000281">
    <property type="term" value="P:mitotic cytokinesis"/>
    <property type="evidence" value="ECO:0007669"/>
    <property type="project" value="InterPro"/>
</dbReference>
<dbReference type="GO" id="GO:0032465">
    <property type="term" value="P:regulation of cytokinesis"/>
    <property type="evidence" value="ECO:0000250"/>
    <property type="project" value="UniProtKB"/>
</dbReference>
<dbReference type="CDD" id="cd15724">
    <property type="entry name" value="FYVE_ZFY26"/>
    <property type="match status" value="1"/>
</dbReference>
<dbReference type="FunFam" id="3.30.40.10:FF:000295">
    <property type="entry name" value="Zinc finger, FYVE domain-containing 26"/>
    <property type="match status" value="1"/>
</dbReference>
<dbReference type="Gene3D" id="3.30.40.10">
    <property type="entry name" value="Zinc/RING finger domain, C3HC4 (zinc finger)"/>
    <property type="match status" value="1"/>
</dbReference>
<dbReference type="InterPro" id="IPR028730">
    <property type="entry name" value="ZFYVE26"/>
</dbReference>
<dbReference type="InterPro" id="IPR000306">
    <property type="entry name" value="Znf_FYVE"/>
</dbReference>
<dbReference type="InterPro" id="IPR017455">
    <property type="entry name" value="Znf_FYVE-rel"/>
</dbReference>
<dbReference type="InterPro" id="IPR011011">
    <property type="entry name" value="Znf_FYVE_PHD"/>
</dbReference>
<dbReference type="InterPro" id="IPR013083">
    <property type="entry name" value="Znf_RING/FYVE/PHD"/>
</dbReference>
<dbReference type="PANTHER" id="PTHR46591">
    <property type="entry name" value="ZINC FINGER FYVE DOMAIN-CONTAINING PROTEIN 26"/>
    <property type="match status" value="1"/>
</dbReference>
<dbReference type="PANTHER" id="PTHR46591:SF1">
    <property type="entry name" value="ZINC FINGER FYVE DOMAIN-CONTAINING PROTEIN 26"/>
    <property type="match status" value="1"/>
</dbReference>
<dbReference type="Pfam" id="PF01363">
    <property type="entry name" value="FYVE"/>
    <property type="match status" value="1"/>
</dbReference>
<dbReference type="SMART" id="SM00064">
    <property type="entry name" value="FYVE"/>
    <property type="match status" value="1"/>
</dbReference>
<dbReference type="SUPFAM" id="SSF57903">
    <property type="entry name" value="FYVE/PHD zinc finger"/>
    <property type="match status" value="1"/>
</dbReference>
<dbReference type="PROSITE" id="PS50178">
    <property type="entry name" value="ZF_FYVE"/>
    <property type="match status" value="1"/>
</dbReference>
<accession>D2H5P6</accession>
<sequence length="2543" mass="283930">MHHPFGKEETASQKQLFGFFCECLRRGEWELAQACVPQLHEAQGDIPKKVEDILQALVVCPDQLRCGQDIDPQRLAWVWFLVLEKWFSQEKKLLPSVFRRKLEFLLLSEDLRRDIPEDILKELYEALAQDTGGPVLDGNQKRESWTPRLSSEAVSVFWDLLRQAPQLAQALLELLRTKDDSAGLSGWSLQKALVDRVRRALGAVQGPTTGPAGIVDAIYGALRSLRCPAEPLGGELRLLCEELLEACRAEGSPLQEEQVLSCLLHKAGRSLVSLYGHIYAEKATEKPAKAVHLGKVSPDHLDPEQAMLALFCNPDPSQAWKSAYFYCLSNSKHFLEQILVTALALLKEEDFPSLGCLLDREFRPLSRLLVLLGWMHCQSLASAKRLLQTLHRAQDQGCDKLLRDACDGLWAHLEVLEWCVQQSSNPIPKRDLLCHLHGGDSHSVLYSLHHLTNLPALREEDVLKLLQKVPAKDPQQEQDSAEAPVPEHLSRCQNLTLYQSFCAMKYAIYALCVNSHQHSQCQECRDSPSEDPALAAEPANDSLSSPGASDLFSTYLARCQQYLCNVPDSLCLELLENIFSLLLITSADLHPEPHLPEDYAEDEDIEGKGLLGLRSPSESPQHIAQPERKSEQGCQEVPRSLACTVPNCLKTEPKESSPGLHGHSFLDLKHFTSGISGFLADEFAIGAFFRLLQEQLDKLSSHSPPEKPKLPEGQSCSGSRDGLQSRLHRFSKVLSEAQWRYKVVTSNQGSEEQPSRRYWPIATGHPSLRRGRRTRRSRPDGRDRSSNPSLESTSSELSTSTSEGSLNAVSGRNELDGRLQPQSQNSLIPMMFSPPESLLASCILRGNFAEAHQVVFMFNLKSSPSSGELMFMERYQEVIQELSRVEHKIENQNSDGGSSTIRRTGSGRSTLQAIGSAAAAGMVFYSISDVTDKLLSTSGEPIPTLQEDFWISNTLVEPTAPLREVLEDLSPPAMAAFDLACSQCQLWKTCKQLLETAERRLNVSLESRGRRLDHILLSADGIRGFPVVLQQISKILNYPLTSAGQSKSESVEEKGAGPPRCSIAELLQMCWPSLTEDCVASHATLSQQLDQVLQVLREALQRPEPRSTPLSSLVEQAAQKAPEAEAHPVHIQTQLLQKNLGKQTPAGSRQTDYMGTFFSYCNTMAAVLLRSLSSEPDHMEVKVGNPFVLLQQSSSQLVSHLLLERQVPPDRLAALLAREGLSLSVPKVIVNCCCEPLALCSSRQSQQTSSLLTHLDVLVQLHTSHCLEDLPLSTLSSPKPTGNSTLERKPHSSPRDSSLPAFTSSALAFLKSRSKLLATVACLGASQGPKLTKPSLSWKELRGRREVPLSAEQVAQECERLLEQFPMLKASLLAAWEPLRRSTEQGQSLAVSLCGRASLSTVLLGLHSPSALDVLTEAFEEALVARDWSRALQLTEVYGRDVDDLSNIKDAVLSCATACDKEGWRFLFPVKDASLRSRLTLQFVDRWPLEWCLEILAYCISDTAVQGGLKCELQRKLAELRVYQKILGLQATPVWCDWQSLRNCCIEDPSAVMNMILEAKEYGLCEEWGCLYPIPREHLISLHQKHLLHLLERGDHEKALQLLRKIPDPTMCLEVTEQSLDQHPSLAASHFLANYLTTHFYGELTAVRHHEIQALYMGSKVLLTLPEPHRASYSHLSSNPLLMLEQLLMNMKVDWATVAVQTLHQLLAGQEIGFTMDDIDSLLSIYAGKALDFPYSLREKRSDSLTHLQEVSQPSDLVTLSRSPSGEFSVAAAVAAPGVSTIHSPSPRERSFPESQPPPEFVPPATPPGRPQWVPDESASICMVCCRERFTMFNRRHHCRRCGRLVCSACSTKKMVVEGCRESPTRVCDQCYSYYNKDVPEENAGQPEAPDSSKSESPPYSAVVRVPKAAEVEWILDLNEEENELVRSEFYYEQSPSASLCIAILNLHRDSIACGHQLIEHCCRLSQGLTNPEVDAGLLTDIMKQLLFSAKMMFVKAGRSQDLALCDSYISKVDVLNILVAASYRHVPPLDQILQPAAVTRLRNQLLEAEYYQLGVEISTKTGLDPTGAWHAWGMACLKAGNLTAAREKFGRCLKPPFDLNQLSHGSRLVQDVVEYLESTVRPLLSLQDDDYFATLKELEATLRTQSLSLEVIPEGKIMNNTYYQECLFYLHNYSTNLAIISFYMRHSCMREALLHLLNKESPPEVFIEGIFQPSYKSGKLHTLENLLESIDPTLETWGKYLIAACQHLQKKNYYHILYELQQFMKDQVRAAMTCIRFFSHKAKTYTELGEKLSWLLKAKDHLKIYLQDTSRSTRRKKTTFFQKKMTAADVSRHMNTLQLQMEVTRFLHRCESAGTSQITTLPLPTLFGNNHMKMDVACKVMLGGKNVEDGFGIAFRVLQDFQLDAAATYCRAARQLVEREKYSEIQQLLKCVSESGMAATSDGDTILLNCLEAFKRIPPQELEGLIQAIHSDDNKVQAYLTCCKLRSAYLIAVKQEHSRATVLVQQVQQAAKSSGDAVVQDICAQWLLTSHTRGSHGSGSRK</sequence>
<feature type="chain" id="PRO_0000408350" description="Zinc finger FYVE domain-containing protein 26">
    <location>
        <begin position="1"/>
        <end position="2543"/>
    </location>
</feature>
<feature type="zinc finger region" description="FYVE-type" evidence="6">
    <location>
        <begin position="1816"/>
        <end position="1876"/>
    </location>
</feature>
<feature type="region of interest" description="Disordered" evidence="7">
    <location>
        <begin position="523"/>
        <end position="545"/>
    </location>
</feature>
<feature type="region of interest" description="Disordered" evidence="7">
    <location>
        <begin position="609"/>
        <end position="636"/>
    </location>
</feature>
<feature type="region of interest" description="Disordered" evidence="7">
    <location>
        <begin position="699"/>
        <end position="722"/>
    </location>
</feature>
<feature type="region of interest" description="Disordered" evidence="7">
    <location>
        <begin position="744"/>
        <end position="820"/>
    </location>
</feature>
<feature type="region of interest" description="Disordered" evidence="7">
    <location>
        <begin position="1272"/>
        <end position="1299"/>
    </location>
</feature>
<feature type="region of interest" description="Disordered" evidence="7">
    <location>
        <begin position="1780"/>
        <end position="1812"/>
    </location>
</feature>
<feature type="coiled-coil region" evidence="5">
    <location>
        <begin position="870"/>
        <end position="897"/>
    </location>
</feature>
<feature type="compositionally biased region" description="Basic and acidic residues" evidence="7">
    <location>
        <begin position="699"/>
        <end position="710"/>
    </location>
</feature>
<feature type="compositionally biased region" description="Basic residues" evidence="7">
    <location>
        <begin position="767"/>
        <end position="776"/>
    </location>
</feature>
<feature type="compositionally biased region" description="Low complexity" evidence="7">
    <location>
        <begin position="786"/>
        <end position="806"/>
    </location>
</feature>
<feature type="compositionally biased region" description="Polar residues" evidence="7">
    <location>
        <begin position="1273"/>
        <end position="1285"/>
    </location>
</feature>
<feature type="compositionally biased region" description="Pro residues" evidence="7">
    <location>
        <begin position="1795"/>
        <end position="1810"/>
    </location>
</feature>
<feature type="binding site" evidence="6">
    <location>
        <position position="1822"/>
    </location>
    <ligand>
        <name>Zn(2+)</name>
        <dbReference type="ChEBI" id="CHEBI:29105"/>
        <label>1</label>
    </ligand>
</feature>
<feature type="binding site" evidence="6">
    <location>
        <position position="1825"/>
    </location>
    <ligand>
        <name>Zn(2+)</name>
        <dbReference type="ChEBI" id="CHEBI:29105"/>
        <label>1</label>
    </ligand>
</feature>
<feature type="binding site" evidence="6">
    <location>
        <position position="1839"/>
    </location>
    <ligand>
        <name>Zn(2+)</name>
        <dbReference type="ChEBI" id="CHEBI:29105"/>
        <label>2</label>
    </ligand>
</feature>
<feature type="binding site" evidence="6">
    <location>
        <position position="1842"/>
    </location>
    <ligand>
        <name>Zn(2+)</name>
        <dbReference type="ChEBI" id="CHEBI:29105"/>
        <label>2</label>
    </ligand>
</feature>
<feature type="binding site" evidence="6">
    <location>
        <position position="1847"/>
    </location>
    <ligand>
        <name>Zn(2+)</name>
        <dbReference type="ChEBI" id="CHEBI:29105"/>
        <label>1</label>
    </ligand>
</feature>
<feature type="binding site" evidence="6">
    <location>
        <position position="1850"/>
    </location>
    <ligand>
        <name>Zn(2+)</name>
        <dbReference type="ChEBI" id="CHEBI:29105"/>
        <label>1</label>
    </ligand>
</feature>
<feature type="binding site" evidence="6">
    <location>
        <position position="1868"/>
    </location>
    <ligand>
        <name>Zn(2+)</name>
        <dbReference type="ChEBI" id="CHEBI:29105"/>
        <label>2</label>
    </ligand>
</feature>
<feature type="binding site" evidence="6">
    <location>
        <position position="1871"/>
    </location>
    <ligand>
        <name>Zn(2+)</name>
        <dbReference type="ChEBI" id="CHEBI:29105"/>
        <label>2</label>
    </ligand>
</feature>
<feature type="modified residue" description="Phosphoserine" evidence="4">
    <location>
        <position position="297"/>
    </location>
</feature>
<feature type="modified residue" description="Phosphoserine" evidence="2">
    <location>
        <position position="615"/>
    </location>
</feature>
<feature type="modified residue" description="Phosphoserine" evidence="4">
    <location>
        <position position="619"/>
    </location>
</feature>
<feature type="modified residue" description="Phosphoserine" evidence="4">
    <location>
        <position position="703"/>
    </location>
</feature>
<feature type="modified residue" description="Phosphoserine" evidence="4">
    <location>
        <position position="802"/>
    </location>
</feature>
<feature type="modified residue" description="Phosphoserine" evidence="3">
    <location>
        <position position="1744"/>
    </location>
</feature>
<feature type="modified residue" description="Phosphoserine" evidence="4">
    <location>
        <position position="1765"/>
    </location>
</feature>
<feature type="modified residue" description="Phosphoserine" evidence="3">
    <location>
        <position position="1784"/>
    </location>
</feature>
<feature type="modified residue" description="Phosphoserine" evidence="3">
    <location>
        <position position="1786"/>
    </location>
</feature>
<comment type="function">
    <text evidence="1">Phosphatidylinositol 3-phosphate-binding protein required for the abscission step in cytokinesis: recruited to the midbody during cytokinesis and acts as a regulator of abscission. May also be required for efficient homologous recombination DNA double-strand break repair (By similarity).</text>
</comment>
<comment type="subunit">
    <text evidence="1">Interacts with AP5Z1, AP5B1, AP5S1 and SPG11. Interacts with TTC19 and KIF13A (By similarity).</text>
</comment>
<comment type="subcellular location">
    <subcellularLocation>
        <location evidence="1">Cytoplasm</location>
        <location evidence="1">Cytoskeleton</location>
        <location evidence="1">Microtubule organizing center</location>
        <location evidence="1">Centrosome</location>
    </subcellularLocation>
    <subcellularLocation>
        <location evidence="1">Midbody</location>
    </subcellularLocation>
    <text evidence="1">Localizes to the centrosome during all stages of the cell cycle. Recruited to the midbody during cytokinesis by KIF13A (By similarity).</text>
</comment>
<comment type="domain">
    <text evidence="1">The FYVE-type zinc finger mediates binding to phosphatidylinositol 3-phosphate and recruitment to the midbody during cytokinesis.</text>
</comment>
<comment type="similarity">
    <text evidence="8">Belongs to the ZFYVE26 family.</text>
</comment>
<organism>
    <name type="scientific">Ailuropoda melanoleuca</name>
    <name type="common">Giant panda</name>
    <dbReference type="NCBI Taxonomy" id="9646"/>
    <lineage>
        <taxon>Eukaryota</taxon>
        <taxon>Metazoa</taxon>
        <taxon>Chordata</taxon>
        <taxon>Craniata</taxon>
        <taxon>Vertebrata</taxon>
        <taxon>Euteleostomi</taxon>
        <taxon>Mammalia</taxon>
        <taxon>Eutheria</taxon>
        <taxon>Laurasiatheria</taxon>
        <taxon>Carnivora</taxon>
        <taxon>Caniformia</taxon>
        <taxon>Ursidae</taxon>
        <taxon>Ailuropoda</taxon>
    </lineage>
</organism>
<protein>
    <recommendedName>
        <fullName>Zinc finger FYVE domain-containing protein 26</fullName>
    </recommendedName>
</protein>
<gene>
    <name type="primary">ZFYVE26</name>
    <name type="ORF">PANDA_005234</name>
</gene>
<keyword id="KW-0131">Cell cycle</keyword>
<keyword id="KW-0132">Cell division</keyword>
<keyword id="KW-0175">Coiled coil</keyword>
<keyword id="KW-0963">Cytoplasm</keyword>
<keyword id="KW-0206">Cytoskeleton</keyword>
<keyword id="KW-0227">DNA damage</keyword>
<keyword id="KW-0234">DNA repair</keyword>
<keyword id="KW-0446">Lipid-binding</keyword>
<keyword id="KW-0479">Metal-binding</keyword>
<keyword id="KW-0597">Phosphoprotein</keyword>
<keyword id="KW-1185">Reference proteome</keyword>
<keyword id="KW-0862">Zinc</keyword>
<keyword id="KW-0863">Zinc-finger</keyword>
<proteinExistence type="inferred from homology"/>
<evidence type="ECO:0000250" key="1"/>
<evidence type="ECO:0000250" key="2">
    <source>
        <dbReference type="UniProtKB" id="D4A8G9"/>
    </source>
</evidence>
<evidence type="ECO:0000250" key="3">
    <source>
        <dbReference type="UniProtKB" id="Q5DU37"/>
    </source>
</evidence>
<evidence type="ECO:0000250" key="4">
    <source>
        <dbReference type="UniProtKB" id="Q68DK2"/>
    </source>
</evidence>
<evidence type="ECO:0000255" key="5"/>
<evidence type="ECO:0000255" key="6">
    <source>
        <dbReference type="PROSITE-ProRule" id="PRU00091"/>
    </source>
</evidence>
<evidence type="ECO:0000256" key="7">
    <source>
        <dbReference type="SAM" id="MobiDB-lite"/>
    </source>
</evidence>
<evidence type="ECO:0000305" key="8"/>